<reference key="1">
    <citation type="journal article" date="2005" name="Science">
        <title>The transcriptional landscape of the mammalian genome.</title>
        <authorList>
            <person name="Carninci P."/>
            <person name="Kasukawa T."/>
            <person name="Katayama S."/>
            <person name="Gough J."/>
            <person name="Frith M.C."/>
            <person name="Maeda N."/>
            <person name="Oyama R."/>
            <person name="Ravasi T."/>
            <person name="Lenhard B."/>
            <person name="Wells C."/>
            <person name="Kodzius R."/>
            <person name="Shimokawa K."/>
            <person name="Bajic V.B."/>
            <person name="Brenner S.E."/>
            <person name="Batalov S."/>
            <person name="Forrest A.R."/>
            <person name="Zavolan M."/>
            <person name="Davis M.J."/>
            <person name="Wilming L.G."/>
            <person name="Aidinis V."/>
            <person name="Allen J.E."/>
            <person name="Ambesi-Impiombato A."/>
            <person name="Apweiler R."/>
            <person name="Aturaliya R.N."/>
            <person name="Bailey T.L."/>
            <person name="Bansal M."/>
            <person name="Baxter L."/>
            <person name="Beisel K.W."/>
            <person name="Bersano T."/>
            <person name="Bono H."/>
            <person name="Chalk A.M."/>
            <person name="Chiu K.P."/>
            <person name="Choudhary V."/>
            <person name="Christoffels A."/>
            <person name="Clutterbuck D.R."/>
            <person name="Crowe M.L."/>
            <person name="Dalla E."/>
            <person name="Dalrymple B.P."/>
            <person name="de Bono B."/>
            <person name="Della Gatta G."/>
            <person name="di Bernardo D."/>
            <person name="Down T."/>
            <person name="Engstrom P."/>
            <person name="Fagiolini M."/>
            <person name="Faulkner G."/>
            <person name="Fletcher C.F."/>
            <person name="Fukushima T."/>
            <person name="Furuno M."/>
            <person name="Futaki S."/>
            <person name="Gariboldi M."/>
            <person name="Georgii-Hemming P."/>
            <person name="Gingeras T.R."/>
            <person name="Gojobori T."/>
            <person name="Green R.E."/>
            <person name="Gustincich S."/>
            <person name="Harbers M."/>
            <person name="Hayashi Y."/>
            <person name="Hensch T.K."/>
            <person name="Hirokawa N."/>
            <person name="Hill D."/>
            <person name="Huminiecki L."/>
            <person name="Iacono M."/>
            <person name="Ikeo K."/>
            <person name="Iwama A."/>
            <person name="Ishikawa T."/>
            <person name="Jakt M."/>
            <person name="Kanapin A."/>
            <person name="Katoh M."/>
            <person name="Kawasawa Y."/>
            <person name="Kelso J."/>
            <person name="Kitamura H."/>
            <person name="Kitano H."/>
            <person name="Kollias G."/>
            <person name="Krishnan S.P."/>
            <person name="Kruger A."/>
            <person name="Kummerfeld S.K."/>
            <person name="Kurochkin I.V."/>
            <person name="Lareau L.F."/>
            <person name="Lazarevic D."/>
            <person name="Lipovich L."/>
            <person name="Liu J."/>
            <person name="Liuni S."/>
            <person name="McWilliam S."/>
            <person name="Madan Babu M."/>
            <person name="Madera M."/>
            <person name="Marchionni L."/>
            <person name="Matsuda H."/>
            <person name="Matsuzawa S."/>
            <person name="Miki H."/>
            <person name="Mignone F."/>
            <person name="Miyake S."/>
            <person name="Morris K."/>
            <person name="Mottagui-Tabar S."/>
            <person name="Mulder N."/>
            <person name="Nakano N."/>
            <person name="Nakauchi H."/>
            <person name="Ng P."/>
            <person name="Nilsson R."/>
            <person name="Nishiguchi S."/>
            <person name="Nishikawa S."/>
            <person name="Nori F."/>
            <person name="Ohara O."/>
            <person name="Okazaki Y."/>
            <person name="Orlando V."/>
            <person name="Pang K.C."/>
            <person name="Pavan W.J."/>
            <person name="Pavesi G."/>
            <person name="Pesole G."/>
            <person name="Petrovsky N."/>
            <person name="Piazza S."/>
            <person name="Reed J."/>
            <person name="Reid J.F."/>
            <person name="Ring B.Z."/>
            <person name="Ringwald M."/>
            <person name="Rost B."/>
            <person name="Ruan Y."/>
            <person name="Salzberg S.L."/>
            <person name="Sandelin A."/>
            <person name="Schneider C."/>
            <person name="Schoenbach C."/>
            <person name="Sekiguchi K."/>
            <person name="Semple C.A."/>
            <person name="Seno S."/>
            <person name="Sessa L."/>
            <person name="Sheng Y."/>
            <person name="Shibata Y."/>
            <person name="Shimada H."/>
            <person name="Shimada K."/>
            <person name="Silva D."/>
            <person name="Sinclair B."/>
            <person name="Sperling S."/>
            <person name="Stupka E."/>
            <person name="Sugiura K."/>
            <person name="Sultana R."/>
            <person name="Takenaka Y."/>
            <person name="Taki K."/>
            <person name="Tammoja K."/>
            <person name="Tan S.L."/>
            <person name="Tang S."/>
            <person name="Taylor M.S."/>
            <person name="Tegner J."/>
            <person name="Teichmann S.A."/>
            <person name="Ueda H.R."/>
            <person name="van Nimwegen E."/>
            <person name="Verardo R."/>
            <person name="Wei C.L."/>
            <person name="Yagi K."/>
            <person name="Yamanishi H."/>
            <person name="Zabarovsky E."/>
            <person name="Zhu S."/>
            <person name="Zimmer A."/>
            <person name="Hide W."/>
            <person name="Bult C."/>
            <person name="Grimmond S.M."/>
            <person name="Teasdale R.D."/>
            <person name="Liu E.T."/>
            <person name="Brusic V."/>
            <person name="Quackenbush J."/>
            <person name="Wahlestedt C."/>
            <person name="Mattick J.S."/>
            <person name="Hume D.A."/>
            <person name="Kai C."/>
            <person name="Sasaki D."/>
            <person name="Tomaru Y."/>
            <person name="Fukuda S."/>
            <person name="Kanamori-Katayama M."/>
            <person name="Suzuki M."/>
            <person name="Aoki J."/>
            <person name="Arakawa T."/>
            <person name="Iida J."/>
            <person name="Imamura K."/>
            <person name="Itoh M."/>
            <person name="Kato T."/>
            <person name="Kawaji H."/>
            <person name="Kawagashira N."/>
            <person name="Kawashima T."/>
            <person name="Kojima M."/>
            <person name="Kondo S."/>
            <person name="Konno H."/>
            <person name="Nakano K."/>
            <person name="Ninomiya N."/>
            <person name="Nishio T."/>
            <person name="Okada M."/>
            <person name="Plessy C."/>
            <person name="Shibata K."/>
            <person name="Shiraki T."/>
            <person name="Suzuki S."/>
            <person name="Tagami M."/>
            <person name="Waki K."/>
            <person name="Watahiki A."/>
            <person name="Okamura-Oho Y."/>
            <person name="Suzuki H."/>
            <person name="Kawai J."/>
            <person name="Hayashizaki Y."/>
        </authorList>
    </citation>
    <scope>NUCLEOTIDE SEQUENCE [LARGE SCALE MRNA] (ISOFORMS 1; 2; 3 AND 4)</scope>
    <scope>NUCLEOTIDE SEQUENCE [LARGE SCALE MRNA] OF 503-757 (ISOFORM 5)</scope>
    <source>
        <strain>C57BL/6J</strain>
        <tissue>Testis</tissue>
        <tissue>Thymus</tissue>
    </source>
</reference>
<reference key="2">
    <citation type="submission" date="2007-04" db="UniProtKB">
        <authorList>
            <person name="Lubec G."/>
            <person name="Klug S."/>
            <person name="Kang S.U."/>
        </authorList>
    </citation>
    <scope>PROTEIN SEQUENCE OF 353-365; 395-409; 581-599 AND 672-688</scope>
    <scope>IDENTIFICATION BY MASS SPECTROMETRY</scope>
    <source>
        <strain>C57BL/6J</strain>
        <tissue>Brain</tissue>
        <tissue>Hippocampus</tissue>
    </source>
</reference>
<reference key="3">
    <citation type="journal article" date="2004" name="Genome Res.">
        <title>The status, quality, and expansion of the NIH full-length cDNA project: the Mammalian Gene Collection (MGC).</title>
        <authorList>
            <consortium name="The MGC Project Team"/>
        </authorList>
    </citation>
    <scope>NUCLEOTIDE SEQUENCE [LARGE SCALE MRNA] OF 475-757</scope>
    <source>
        <strain>Czech II</strain>
        <strain>FVB/N</strain>
        <tissue>Kidney</tissue>
        <tissue>Mammary tumor</tissue>
    </source>
</reference>
<reference key="4">
    <citation type="journal article" date="2008" name="J. Proteome Res.">
        <title>Large-scale identification and evolution indexing of tyrosine phosphorylation sites from murine brain.</title>
        <authorList>
            <person name="Ballif B.A."/>
            <person name="Carey G.R."/>
            <person name="Sunyaev S.R."/>
            <person name="Gygi S.P."/>
        </authorList>
    </citation>
    <scope>PHOSPHORYLATION [LARGE SCALE ANALYSIS] AT TYR-506</scope>
    <scope>IDENTIFICATION BY MASS SPECTROMETRY [LARGE SCALE ANALYSIS]</scope>
    <source>
        <tissue>Brain</tissue>
    </source>
</reference>
<reference key="5">
    <citation type="journal article" date="2010" name="Cell">
        <title>A tissue-specific atlas of mouse protein phosphorylation and expression.</title>
        <authorList>
            <person name="Huttlin E.L."/>
            <person name="Jedrychowski M.P."/>
            <person name="Elias J.E."/>
            <person name="Goswami T."/>
            <person name="Rad R."/>
            <person name="Beausoleil S.A."/>
            <person name="Villen J."/>
            <person name="Haas W."/>
            <person name="Sowa M.E."/>
            <person name="Gygi S.P."/>
        </authorList>
    </citation>
    <scope>IDENTIFICATION BY MASS SPECTROMETRY [LARGE SCALE ANALYSIS]</scope>
    <source>
        <tissue>Brain</tissue>
        <tissue>Brown adipose tissue</tissue>
        <tissue>Heart</tissue>
        <tissue>Kidney</tissue>
        <tissue>Liver</tissue>
        <tissue>Lung</tissue>
        <tissue>Pancreas</tissue>
        <tissue>Spleen</tissue>
        <tissue>Testis</tissue>
    </source>
</reference>
<reference key="6">
    <citation type="journal article" date="2011" name="J. Biol. Chem.">
        <title>ChChd3, an inner mitochondrial membrane protein, is essential for maintaining crista integrity and mitochondrial function.</title>
        <authorList>
            <person name="Darshi M."/>
            <person name="Mendiola V.L."/>
            <person name="Mackey M.R."/>
            <person name="Murphy A.N."/>
            <person name="Koller A."/>
            <person name="Perkins G.A."/>
            <person name="Ellisman M.H."/>
            <person name="Taylor S.S."/>
        </authorList>
    </citation>
    <scope>INTERACTION WITH CHCHD3 AND OPA1</scope>
</reference>
<reference key="7">
    <citation type="journal article" date="2021" name="Proc. Natl. Acad. Sci. U.S.A.">
        <title>ARMC12 regulates spatiotemporal mitochondrial dynamics during spermiogenesis and is required for male fertility.</title>
        <authorList>
            <person name="Shimada K."/>
            <person name="Park S."/>
            <person name="Miyata H."/>
            <person name="Yu Z."/>
            <person name="Morohoshi A."/>
            <person name="Oura S."/>
            <person name="Matzuk M.M."/>
            <person name="Ikawa M."/>
        </authorList>
    </citation>
    <scope>INTERACTION WITH ARMC12</scope>
</reference>
<gene>
    <name type="primary">Immt</name>
    <name type="synonym">Mic60</name>
</gene>
<name>MIC60_MOUSE</name>
<comment type="function">
    <text evidence="1">Component of the MICOS complex, a large protein complex of the mitochondrial inner membrane that plays crucial roles in the maintenance of crista junctions, inner membrane architecture, and formation of contact sites to the outer membrane. Plays an important role in the maintenance of the MICOS complex stability and the mitochondrial cristae morphology.</text>
</comment>
<comment type="subunit">
    <text evidence="1 5 6">Component of the mitochondrial contact site and cristae organizing system (MICOS) complex, composed of at least MICOS10/MIC10, CHCHD3/MIC19, CHCHD6/MIC25, APOOL/MIC27, IMMT/MIC60, APOO/MIC23/MIC26 and MICOS13/MIC13 (By similarity). This complex was also known under the names MINOS or MitOS complex. The MICOS complex associates with mitochondrial outer membrane proteins SAMM50, MTX1 and MTX2 (together described as components of the mitochondrial outer membrane sorting assembly machinery (SAM) complex) and DNAJC11, mitochondrial inner membrane protein TMEM11 and with HSPA9 (By similarity). The MICOS and SAM complexes together with DNAJC11 are part of a large protein complex spanning both membranes termed the mitochondrial intermembrane space bridging (MIB) complex (By similarity). Interacts with MICOS13/MIC13, MICOS10/MIC10, CHCHD6/MIC25, SAMM50 and TMEM11 (By similarity). Interacts with CHCHD3/MIC19 (PubMed:21081504). Interacts with APOO/MIC23/MIC26 and APOOL/MIC27 (By similarity). Interacts with HSPA1A/HSPA1B and OPA1, preferentially with the soluble OPA1 form (PubMed:21081504). Interacts with ARMC1 (By similarity). Interacts with ARMC12 (PubMed:33536340).</text>
</comment>
<comment type="subcellular location">
    <subcellularLocation>
        <location evidence="1">Mitochondrion inner membrane</location>
        <topology evidence="3">Single-pass membrane protein</topology>
    </subcellularLocation>
    <subcellularLocation>
        <location evidence="1">Mitochondrion</location>
    </subcellularLocation>
</comment>
<comment type="alternative products">
    <event type="alternative splicing"/>
    <isoform>
        <id>Q8CAQ8-1</id>
        <name>1</name>
        <sequence type="displayed"/>
    </isoform>
    <isoform>
        <id>Q8CAQ8-2</id>
        <name>2</name>
        <sequence type="described" ref="VSP_007003"/>
    </isoform>
    <isoform>
        <id>Q8CAQ8-3</id>
        <name>3</name>
        <sequence type="described" ref="VSP_007003 VSP_007004 VSP_007005"/>
    </isoform>
    <isoform>
        <id>Q8CAQ8-4</id>
        <name>4</name>
        <sequence type="described" ref="VSP_007003 VSP_013222 VSP_013223"/>
    </isoform>
    <isoform>
        <id>Q8CAQ8-5</id>
        <name>5</name>
        <sequence type="described" ref="VSP_013224"/>
    </isoform>
</comment>
<comment type="miscellaneous">
    <molecule>Isoform 4</molecule>
    <text evidence="8">May be due to intron retention.</text>
</comment>
<comment type="similarity">
    <text evidence="8">Belongs to the MICOS complex subunit Mic60 family.</text>
</comment>
<comment type="sequence caution" evidence="8">
    <conflict type="erroneous initiation">
        <sequence resource="EMBL-CDS" id="BAB24817"/>
    </conflict>
    <text>Truncated N-terminus.</text>
</comment>
<comment type="sequence caution" evidence="8">
    <conflict type="frameshift">
        <sequence resource="EMBL-CDS" id="BAB24817"/>
    </conflict>
</comment>
<proteinExistence type="evidence at protein level"/>
<sequence>MLRACQLSGVTVAAQSCLCGKFVLRPLRPCRRYSTSSSSGLTAGKIAGAGLLFVGGGIGGTILYAKWDSHFRESVEKTIPYSDKLFGMVLGSAPYTVPLPKKPVQSGPLKISSVSEVMKDSKLPVAQSQKTKGDTPASAASTGAAQIISAAGDTLSVPAPAVQHEDTIKTECPNTNEGKSTSETTEEAFSSSVRERPPEEVAARLAQQEKQEQVEMESLAKSLEDALNRTSSVTLQTITAQNAAVQAVKAHSNILKTAMDNSEIAGEKKSAQWRTVEGALKERRKAVDEAADALLKAKEELEKMKTIIEDAKKREIAGATPHITAAEGRLHNMIVDLDNVVKKVQAAQSEAKVVSQYHELVVQARDDFRKELDSITPDITPGWKGMSISDLAGKLSTDDLNSLIAHAHRRIDQLNRELAQQKATEKQHIELALEKHKLEEKRTFDSAVAKALEHHRSEIQAEQDRKVEEVRDAMENEMRTQLRRQAAAHTDHLRDVLKVQEQELKYEFEQGLSEKLSEQELEFRRRSQEQMDSFTLDINTAYARLRGIEQAVQSHAVAEEEARKAHQLWLSVEALKYSMKTSSAEMPTIPLGSAVEAIRVNCSDNEFTQALTAAIPPESLTRGVYSEETLRARFYAVQKLARRVAMIDETRNSLYQYFLSYLQSLLLFPPKQLKPPAELYPEDINTFKLLSYASYCIEHGDLELAAKFVNQLKGESRRVAQDWLKEARMTLETKQIVEILTAYASAVGIGTTQVQQE</sequence>
<evidence type="ECO:0000250" key="1">
    <source>
        <dbReference type="UniProtKB" id="Q16891"/>
    </source>
</evidence>
<evidence type="ECO:0000250" key="2">
    <source>
        <dbReference type="UniProtKB" id="Q3KR86"/>
    </source>
</evidence>
<evidence type="ECO:0000255" key="3"/>
<evidence type="ECO:0000256" key="4">
    <source>
        <dbReference type="SAM" id="MobiDB-lite"/>
    </source>
</evidence>
<evidence type="ECO:0000269" key="5">
    <source>
    </source>
</evidence>
<evidence type="ECO:0000269" key="6">
    <source>
    </source>
</evidence>
<evidence type="ECO:0000303" key="7">
    <source>
    </source>
</evidence>
<evidence type="ECO:0000305" key="8"/>
<evidence type="ECO:0007744" key="9">
    <source>
    </source>
</evidence>
<organism>
    <name type="scientific">Mus musculus</name>
    <name type="common">Mouse</name>
    <dbReference type="NCBI Taxonomy" id="10090"/>
    <lineage>
        <taxon>Eukaryota</taxon>
        <taxon>Metazoa</taxon>
        <taxon>Chordata</taxon>
        <taxon>Craniata</taxon>
        <taxon>Vertebrata</taxon>
        <taxon>Euteleostomi</taxon>
        <taxon>Mammalia</taxon>
        <taxon>Eutheria</taxon>
        <taxon>Euarchontoglires</taxon>
        <taxon>Glires</taxon>
        <taxon>Rodentia</taxon>
        <taxon>Myomorpha</taxon>
        <taxon>Muroidea</taxon>
        <taxon>Muridae</taxon>
        <taxon>Murinae</taxon>
        <taxon>Mus</taxon>
        <taxon>Mus</taxon>
    </lineage>
</organism>
<accession>Q8CAQ8</accession>
<accession>Q66JS4</accession>
<accession>Q7TNE2</accession>
<accession>Q8C7V1</accession>
<accession>Q8CCI0</accession>
<accession>Q8CDA8</accession>
<accession>Q9D9F6</accession>
<keyword id="KW-0007">Acetylation</keyword>
<keyword id="KW-0025">Alternative splicing</keyword>
<keyword id="KW-0175">Coiled coil</keyword>
<keyword id="KW-0903">Direct protein sequencing</keyword>
<keyword id="KW-0472">Membrane</keyword>
<keyword id="KW-0496">Mitochondrion</keyword>
<keyword id="KW-0999">Mitochondrion inner membrane</keyword>
<keyword id="KW-0597">Phosphoprotein</keyword>
<keyword id="KW-1185">Reference proteome</keyword>
<keyword id="KW-0809">Transit peptide</keyword>
<keyword id="KW-0812">Transmembrane</keyword>
<keyword id="KW-1133">Transmembrane helix</keyword>
<protein>
    <recommendedName>
        <fullName>MICOS complex subunit Mic60</fullName>
    </recommendedName>
    <alternativeName>
        <fullName>Mitochondrial inner membrane protein</fullName>
    </alternativeName>
    <alternativeName>
        <fullName>Mitofilin</fullName>
    </alternativeName>
</protein>
<feature type="transit peptide" description="Mitochondrion" evidence="3">
    <location>
        <begin position="1"/>
        <end position="33"/>
    </location>
</feature>
<feature type="chain" id="PRO_0000084185" description="MICOS complex subunit Mic60">
    <location>
        <begin position="34"/>
        <end position="757"/>
    </location>
</feature>
<feature type="topological domain" description="Mitochondrial matrix" evidence="3">
    <location>
        <begin position="34"/>
        <end position="45"/>
    </location>
</feature>
<feature type="transmembrane region" description="Helical" evidence="3">
    <location>
        <begin position="46"/>
        <end position="65"/>
    </location>
</feature>
<feature type="topological domain" description="Mitochondrial intermembrane" evidence="3">
    <location>
        <begin position="66"/>
        <end position="757"/>
    </location>
</feature>
<feature type="region of interest" description="Disordered" evidence="4">
    <location>
        <begin position="164"/>
        <end position="199"/>
    </location>
</feature>
<feature type="coiled-coil region" evidence="3">
    <location>
        <begin position="199"/>
        <end position="231"/>
    </location>
</feature>
<feature type="coiled-coil region" evidence="3">
    <location>
        <begin position="279"/>
        <end position="317"/>
    </location>
</feature>
<feature type="coiled-coil region" evidence="3">
    <location>
        <begin position="397"/>
        <end position="442"/>
    </location>
</feature>
<feature type="compositionally biased region" description="Low complexity" evidence="4">
    <location>
        <begin position="181"/>
        <end position="192"/>
    </location>
</feature>
<feature type="modified residue" description="Phosphoserine" evidence="1">
    <location>
        <position position="112"/>
    </location>
</feature>
<feature type="modified residue" description="Phosphoserine" evidence="1">
    <location>
        <position position="113"/>
    </location>
</feature>
<feature type="modified residue" description="N6-acetyllysine" evidence="1">
    <location>
        <position position="210"/>
    </location>
</feature>
<feature type="modified residue" description="N6-acetyllysine" evidence="1">
    <location>
        <position position="221"/>
    </location>
</feature>
<feature type="modified residue" description="Phosphoserine" evidence="2">
    <location>
        <position position="222"/>
    </location>
</feature>
<feature type="modified residue" description="Phosphoserine" evidence="1">
    <location>
        <position position="387"/>
    </location>
</feature>
<feature type="modified residue" description="Phosphoserine" evidence="1">
    <location>
        <position position="389"/>
    </location>
</feature>
<feature type="modified residue" description="N6-acetyllysine" evidence="1">
    <location>
        <position position="450"/>
    </location>
</feature>
<feature type="modified residue" description="Phosphotyrosine" evidence="9">
    <location>
        <position position="506"/>
    </location>
</feature>
<feature type="splice variant" id="VSP_007003" description="In isoform 2, isoform 3 and isoform 4." evidence="7">
    <location>
        <begin position="141"/>
        <end position="151"/>
    </location>
</feature>
<feature type="splice variant" id="VSP_007004" description="In isoform 3." evidence="7">
    <original>EEAFSSSVRERPPEEVAARLAQQEKQEQVEMES</original>
    <variation>A</variation>
    <location>
        <begin position="186"/>
        <end position="218"/>
    </location>
</feature>
<feature type="splice variant" id="VSP_013222" description="In isoform 4." evidence="7">
    <original>EEAFSSSVR</original>
    <variation>GSLIIYIML</variation>
    <location>
        <begin position="186"/>
        <end position="194"/>
    </location>
</feature>
<feature type="splice variant" id="VSP_013223" description="In isoform 4." evidence="7">
    <location>
        <begin position="195"/>
        <end position="757"/>
    </location>
</feature>
<feature type="splice variant" id="VSP_007005" description="In isoform 3." evidence="7">
    <original>SISDLA</original>
    <variation>T</variation>
    <location>
        <begin position="387"/>
        <end position="392"/>
    </location>
</feature>
<feature type="splice variant" id="VSP_013224" description="In isoform 5." evidence="7">
    <original>E</original>
    <variation>FWIKAVFKSQMSNPTSFKVTRLNSVQKNRSSPLI</variation>
    <location>
        <position position="757"/>
    </location>
</feature>
<feature type="sequence conflict" description="In Ref. 1; BAB24817." evidence="8" ref="1">
    <original>D</original>
    <variation>E</variation>
    <location>
        <position position="532"/>
    </location>
</feature>
<feature type="sequence conflict" description="In Ref. 1; BAB24817." evidence="8" ref="1">
    <original>F</original>
    <variation>L</variation>
    <location>
        <position position="658"/>
    </location>
</feature>
<dbReference type="EMBL" id="AK006977">
    <property type="protein sequence ID" value="BAB24817.1"/>
    <property type="status" value="ALT_SEQ"/>
    <property type="molecule type" value="mRNA"/>
</dbReference>
<dbReference type="EMBL" id="AK030841">
    <property type="protein sequence ID" value="BAC27154.1"/>
    <property type="molecule type" value="mRNA"/>
</dbReference>
<dbReference type="EMBL" id="AK033126">
    <property type="protein sequence ID" value="BAC28163.1"/>
    <property type="molecule type" value="mRNA"/>
</dbReference>
<dbReference type="EMBL" id="AK038129">
    <property type="protein sequence ID" value="BAC29936.1"/>
    <property type="molecule type" value="mRNA"/>
</dbReference>
<dbReference type="EMBL" id="AK049189">
    <property type="protein sequence ID" value="BAC33599.1"/>
    <property type="molecule type" value="mRNA"/>
</dbReference>
<dbReference type="EMBL" id="BC055840">
    <property type="protein sequence ID" value="AAH55840.1"/>
    <property type="molecule type" value="mRNA"/>
</dbReference>
<dbReference type="EMBL" id="BC080790">
    <property type="protein sequence ID" value="AAH80790.1"/>
    <property type="molecule type" value="mRNA"/>
</dbReference>
<dbReference type="CCDS" id="CCDS39509.1">
    <molecule id="Q8CAQ8-1"/>
</dbReference>
<dbReference type="CCDS" id="CCDS57425.1">
    <molecule id="Q8CAQ8-2"/>
</dbReference>
<dbReference type="CCDS" id="CCDS57426.1">
    <molecule id="Q8CAQ8-3"/>
</dbReference>
<dbReference type="RefSeq" id="NP_001240610.1">
    <molecule id="Q8CAQ8-2"/>
    <property type="nucleotide sequence ID" value="NM_001253681.1"/>
</dbReference>
<dbReference type="RefSeq" id="NP_001240616.1">
    <molecule id="Q8CAQ8-3"/>
    <property type="nucleotide sequence ID" value="NM_001253687.1"/>
</dbReference>
<dbReference type="RefSeq" id="NP_001240617.1">
    <property type="nucleotide sequence ID" value="NM_001253688.1"/>
</dbReference>
<dbReference type="RefSeq" id="NP_083949.2">
    <molecule id="Q8CAQ8-1"/>
    <property type="nucleotide sequence ID" value="NM_029673.3"/>
</dbReference>
<dbReference type="SMR" id="Q8CAQ8"/>
<dbReference type="BioGRID" id="218208">
    <property type="interactions" value="67"/>
</dbReference>
<dbReference type="CORUM" id="Q8CAQ8"/>
<dbReference type="DIP" id="DIP-32050N"/>
<dbReference type="FunCoup" id="Q8CAQ8">
    <property type="interactions" value="1897"/>
</dbReference>
<dbReference type="IntAct" id="Q8CAQ8">
    <property type="interactions" value="45"/>
</dbReference>
<dbReference type="MINT" id="Q8CAQ8"/>
<dbReference type="STRING" id="10090.ENSMUSP00000066181"/>
<dbReference type="GlyGen" id="Q8CAQ8">
    <property type="glycosylation" value="2 sites, 1 N-linked glycan (1 site), 1 O-linked glycan (1 site)"/>
</dbReference>
<dbReference type="iPTMnet" id="Q8CAQ8"/>
<dbReference type="MetOSite" id="Q8CAQ8"/>
<dbReference type="PhosphoSitePlus" id="Q8CAQ8"/>
<dbReference type="SwissPalm" id="Q8CAQ8"/>
<dbReference type="REPRODUCTION-2DPAGE" id="Q8CAQ8"/>
<dbReference type="jPOST" id="Q8CAQ8"/>
<dbReference type="PaxDb" id="10090-ENSMUSP00000066181"/>
<dbReference type="PeptideAtlas" id="Q8CAQ8"/>
<dbReference type="ProteomicsDB" id="290234">
    <molecule id="Q8CAQ8-1"/>
</dbReference>
<dbReference type="ProteomicsDB" id="290235">
    <molecule id="Q8CAQ8-2"/>
</dbReference>
<dbReference type="ProteomicsDB" id="290236">
    <molecule id="Q8CAQ8-3"/>
</dbReference>
<dbReference type="ProteomicsDB" id="290237">
    <molecule id="Q8CAQ8-4"/>
</dbReference>
<dbReference type="ProteomicsDB" id="290238">
    <molecule id="Q8CAQ8-5"/>
</dbReference>
<dbReference type="Pumba" id="Q8CAQ8"/>
<dbReference type="Antibodypedia" id="32043">
    <property type="antibodies" value="353 antibodies from 36 providers"/>
</dbReference>
<dbReference type="DNASU" id="76614"/>
<dbReference type="Ensembl" id="ENSMUST00000064062.13">
    <molecule id="Q8CAQ8-1"/>
    <property type="protein sequence ID" value="ENSMUSP00000066181.7"/>
    <property type="gene ID" value="ENSMUSG00000052337.16"/>
</dbReference>
<dbReference type="Ensembl" id="ENSMUST00000101301.10">
    <molecule id="Q8CAQ8-2"/>
    <property type="protein sequence ID" value="ENSMUSP00000098859.4"/>
    <property type="gene ID" value="ENSMUSG00000052337.16"/>
</dbReference>
<dbReference type="Ensembl" id="ENSMUST00000114151.10">
    <molecule id="Q8CAQ8-3"/>
    <property type="protein sequence ID" value="ENSMUSP00000109788.4"/>
    <property type="gene ID" value="ENSMUSG00000052337.16"/>
</dbReference>
<dbReference type="GeneID" id="76614"/>
<dbReference type="KEGG" id="mmu:76614"/>
<dbReference type="UCSC" id="uc009che.2">
    <molecule id="Q8CAQ8-4"/>
    <property type="organism name" value="mouse"/>
</dbReference>
<dbReference type="UCSC" id="uc009chi.2">
    <molecule id="Q8CAQ8-1"/>
    <property type="organism name" value="mouse"/>
</dbReference>
<dbReference type="UCSC" id="uc009chj.2">
    <molecule id="Q8CAQ8-2"/>
    <property type="organism name" value="mouse"/>
</dbReference>
<dbReference type="UCSC" id="uc009chm.2">
    <molecule id="Q8CAQ8-3"/>
    <property type="organism name" value="mouse"/>
</dbReference>
<dbReference type="AGR" id="MGI:1923864"/>
<dbReference type="CTD" id="10989"/>
<dbReference type="MGI" id="MGI:1923864">
    <property type="gene designation" value="Immt"/>
</dbReference>
<dbReference type="VEuPathDB" id="HostDB:ENSMUSG00000052337"/>
<dbReference type="eggNOG" id="KOG1854">
    <property type="taxonomic scope" value="Eukaryota"/>
</dbReference>
<dbReference type="GeneTree" id="ENSGT00390000002313"/>
<dbReference type="InParanoid" id="Q8CAQ8"/>
<dbReference type="OMA" id="WIKFREL"/>
<dbReference type="OrthoDB" id="10261039at2759"/>
<dbReference type="PhylomeDB" id="Q8CAQ8"/>
<dbReference type="TreeFam" id="TF312832"/>
<dbReference type="BioGRID-ORCS" id="76614">
    <property type="hits" value="15 hits in 77 CRISPR screens"/>
</dbReference>
<dbReference type="CD-CODE" id="CE726F99">
    <property type="entry name" value="Postsynaptic density"/>
</dbReference>
<dbReference type="ChiTaRS" id="Immt">
    <property type="organism name" value="mouse"/>
</dbReference>
<dbReference type="PRO" id="PR:Q8CAQ8"/>
<dbReference type="Proteomes" id="UP000000589">
    <property type="component" value="Chromosome 6"/>
</dbReference>
<dbReference type="RNAct" id="Q8CAQ8">
    <property type="molecule type" value="protein"/>
</dbReference>
<dbReference type="Bgee" id="ENSMUSG00000052337">
    <property type="expression patterns" value="Expressed in myocardium of ventricle and 260 other cell types or tissues"/>
</dbReference>
<dbReference type="ExpressionAtlas" id="Q8CAQ8">
    <property type="expression patterns" value="baseline and differential"/>
</dbReference>
<dbReference type="GO" id="GO:0061617">
    <property type="term" value="C:MICOS complex"/>
    <property type="evidence" value="ECO:0007669"/>
    <property type="project" value="Ensembl"/>
</dbReference>
<dbReference type="GO" id="GO:0005743">
    <property type="term" value="C:mitochondrial inner membrane"/>
    <property type="evidence" value="ECO:0000250"/>
    <property type="project" value="UniProtKB"/>
</dbReference>
<dbReference type="GO" id="GO:0005758">
    <property type="term" value="C:mitochondrial intermembrane space"/>
    <property type="evidence" value="ECO:0000314"/>
    <property type="project" value="MGI"/>
</dbReference>
<dbReference type="GO" id="GO:0005739">
    <property type="term" value="C:mitochondrion"/>
    <property type="evidence" value="ECO:0000314"/>
    <property type="project" value="MGI"/>
</dbReference>
<dbReference type="GO" id="GO:0043209">
    <property type="term" value="C:myelin sheath"/>
    <property type="evidence" value="ECO:0007005"/>
    <property type="project" value="UniProtKB"/>
</dbReference>
<dbReference type="GO" id="GO:0042407">
    <property type="term" value="P:cristae formation"/>
    <property type="evidence" value="ECO:0007669"/>
    <property type="project" value="Ensembl"/>
</dbReference>
<dbReference type="GO" id="GO:0051560">
    <property type="term" value="P:mitochondrial calcium ion homeostasis"/>
    <property type="evidence" value="ECO:0000315"/>
    <property type="project" value="MGI"/>
</dbReference>
<dbReference type="GO" id="GO:0070050">
    <property type="term" value="P:neuron cellular homeostasis"/>
    <property type="evidence" value="ECO:0000315"/>
    <property type="project" value="MGI"/>
</dbReference>
<dbReference type="InterPro" id="IPR019133">
    <property type="entry name" value="MIC60"/>
</dbReference>
<dbReference type="PANTHER" id="PTHR15415:SF7">
    <property type="entry name" value="MICOS COMPLEX SUBUNIT MIC60"/>
    <property type="match status" value="1"/>
</dbReference>
<dbReference type="PANTHER" id="PTHR15415">
    <property type="entry name" value="MITOFILIN"/>
    <property type="match status" value="1"/>
</dbReference>
<dbReference type="Pfam" id="PF09731">
    <property type="entry name" value="Mitofilin"/>
    <property type="match status" value="1"/>
</dbReference>